<name>CYB_TAMTE</name>
<accession>Q8LWN0</accession>
<sequence>MTHIRKTHPLFKIINQSFIDLPTPSNISAWWNFGSLLGVCLVIQTLTGLFLAMHYTSDTITAFSSVTHICRDVNYGWLIRYIHANGASMFFMCLYLHVGRGLYYGSYLYLETWNIGVILLLATMATAFMGYVLPWGQMSFWGATVITNLLSAIPYIGTDLVEWIWGGFSVDKATLTRFFAFHFILPFIITALAMTHLLFLHETGSNNPLGLSSDMDKIPFHPYYTIKDILGLLIMIATLVTLVLFSPDLLGDPDNYTPANPLSTPPHIKPEWYFLFAYAILRSIPNKLGGVVALVCSILVLMIMPLLHTAKQRSMMFRPLSQLLFRLLVANLLILTWIGGQPVEHPFIIIGQVASISYFSIILILMPLAGILENHLMKL</sequence>
<organism>
    <name type="scientific">Tamandua tetradactyla</name>
    <name type="common">Southern anteater</name>
    <name type="synonym">Myrmecophaga tetradactyla</name>
    <dbReference type="NCBI Taxonomy" id="48850"/>
    <lineage>
        <taxon>Eukaryota</taxon>
        <taxon>Metazoa</taxon>
        <taxon>Chordata</taxon>
        <taxon>Craniata</taxon>
        <taxon>Vertebrata</taxon>
        <taxon>Euteleostomi</taxon>
        <taxon>Mammalia</taxon>
        <taxon>Eutheria</taxon>
        <taxon>Xenarthra</taxon>
        <taxon>Pilosa</taxon>
        <taxon>Vermilingua</taxon>
        <taxon>Myrmecophagidae</taxon>
        <taxon>Tamandua</taxon>
    </lineage>
</organism>
<feature type="chain" id="PRO_0000061643" description="Cytochrome b">
    <location>
        <begin position="1"/>
        <end position="379"/>
    </location>
</feature>
<feature type="transmembrane region" description="Helical" evidence="2">
    <location>
        <begin position="33"/>
        <end position="53"/>
    </location>
</feature>
<feature type="transmembrane region" description="Helical" evidence="2">
    <location>
        <begin position="77"/>
        <end position="98"/>
    </location>
</feature>
<feature type="transmembrane region" description="Helical" evidence="2">
    <location>
        <begin position="113"/>
        <end position="133"/>
    </location>
</feature>
<feature type="transmembrane region" description="Helical" evidence="2">
    <location>
        <begin position="178"/>
        <end position="198"/>
    </location>
</feature>
<feature type="transmembrane region" description="Helical" evidence="2">
    <location>
        <begin position="226"/>
        <end position="246"/>
    </location>
</feature>
<feature type="transmembrane region" description="Helical" evidence="2">
    <location>
        <begin position="288"/>
        <end position="308"/>
    </location>
</feature>
<feature type="transmembrane region" description="Helical" evidence="2">
    <location>
        <begin position="320"/>
        <end position="340"/>
    </location>
</feature>
<feature type="transmembrane region" description="Helical" evidence="2">
    <location>
        <begin position="347"/>
        <end position="367"/>
    </location>
</feature>
<feature type="binding site" description="axial binding residue" evidence="2">
    <location>
        <position position="83"/>
    </location>
    <ligand>
        <name>heme b</name>
        <dbReference type="ChEBI" id="CHEBI:60344"/>
        <label>b562</label>
    </ligand>
    <ligandPart>
        <name>Fe</name>
        <dbReference type="ChEBI" id="CHEBI:18248"/>
    </ligandPart>
</feature>
<feature type="binding site" description="axial binding residue" evidence="2">
    <location>
        <position position="97"/>
    </location>
    <ligand>
        <name>heme b</name>
        <dbReference type="ChEBI" id="CHEBI:60344"/>
        <label>b566</label>
    </ligand>
    <ligandPart>
        <name>Fe</name>
        <dbReference type="ChEBI" id="CHEBI:18248"/>
    </ligandPart>
</feature>
<feature type="binding site" description="axial binding residue" evidence="2">
    <location>
        <position position="182"/>
    </location>
    <ligand>
        <name>heme b</name>
        <dbReference type="ChEBI" id="CHEBI:60344"/>
        <label>b562</label>
    </ligand>
    <ligandPart>
        <name>Fe</name>
        <dbReference type="ChEBI" id="CHEBI:18248"/>
    </ligandPart>
</feature>
<feature type="binding site" description="axial binding residue" evidence="2">
    <location>
        <position position="196"/>
    </location>
    <ligand>
        <name>heme b</name>
        <dbReference type="ChEBI" id="CHEBI:60344"/>
        <label>b566</label>
    </ligand>
    <ligandPart>
        <name>Fe</name>
        <dbReference type="ChEBI" id="CHEBI:18248"/>
    </ligandPart>
</feature>
<feature type="binding site" evidence="2">
    <location>
        <position position="201"/>
    </location>
    <ligand>
        <name>a ubiquinone</name>
        <dbReference type="ChEBI" id="CHEBI:16389"/>
    </ligand>
</feature>
<dbReference type="EMBL" id="AJ421450">
    <property type="protein sequence ID" value="CAD13420.1"/>
    <property type="molecule type" value="Genomic_DNA"/>
</dbReference>
<dbReference type="RefSeq" id="NP_659388.1">
    <property type="nucleotide sequence ID" value="NC_004032.1"/>
</dbReference>
<dbReference type="SMR" id="Q8LWN0"/>
<dbReference type="GeneID" id="805030"/>
<dbReference type="CTD" id="4519"/>
<dbReference type="GO" id="GO:0005743">
    <property type="term" value="C:mitochondrial inner membrane"/>
    <property type="evidence" value="ECO:0007669"/>
    <property type="project" value="UniProtKB-SubCell"/>
</dbReference>
<dbReference type="GO" id="GO:0045275">
    <property type="term" value="C:respiratory chain complex III"/>
    <property type="evidence" value="ECO:0007669"/>
    <property type="project" value="InterPro"/>
</dbReference>
<dbReference type="GO" id="GO:0046872">
    <property type="term" value="F:metal ion binding"/>
    <property type="evidence" value="ECO:0007669"/>
    <property type="project" value="UniProtKB-KW"/>
</dbReference>
<dbReference type="GO" id="GO:0008121">
    <property type="term" value="F:ubiquinol-cytochrome-c reductase activity"/>
    <property type="evidence" value="ECO:0007669"/>
    <property type="project" value="InterPro"/>
</dbReference>
<dbReference type="GO" id="GO:0006122">
    <property type="term" value="P:mitochondrial electron transport, ubiquinol to cytochrome c"/>
    <property type="evidence" value="ECO:0007669"/>
    <property type="project" value="TreeGrafter"/>
</dbReference>
<dbReference type="CDD" id="cd00290">
    <property type="entry name" value="cytochrome_b_C"/>
    <property type="match status" value="1"/>
</dbReference>
<dbReference type="CDD" id="cd00284">
    <property type="entry name" value="Cytochrome_b_N"/>
    <property type="match status" value="1"/>
</dbReference>
<dbReference type="FunFam" id="1.20.810.10:FF:000002">
    <property type="entry name" value="Cytochrome b"/>
    <property type="match status" value="1"/>
</dbReference>
<dbReference type="Gene3D" id="1.20.810.10">
    <property type="entry name" value="Cytochrome Bc1 Complex, Chain C"/>
    <property type="match status" value="1"/>
</dbReference>
<dbReference type="InterPro" id="IPR005798">
    <property type="entry name" value="Cyt_b/b6_C"/>
</dbReference>
<dbReference type="InterPro" id="IPR036150">
    <property type="entry name" value="Cyt_b/b6_C_sf"/>
</dbReference>
<dbReference type="InterPro" id="IPR005797">
    <property type="entry name" value="Cyt_b/b6_N"/>
</dbReference>
<dbReference type="InterPro" id="IPR027387">
    <property type="entry name" value="Cytb/b6-like_sf"/>
</dbReference>
<dbReference type="InterPro" id="IPR030689">
    <property type="entry name" value="Cytochrome_b"/>
</dbReference>
<dbReference type="InterPro" id="IPR048260">
    <property type="entry name" value="Cytochrome_b_C_euk/bac"/>
</dbReference>
<dbReference type="InterPro" id="IPR048259">
    <property type="entry name" value="Cytochrome_b_N_euk/bac"/>
</dbReference>
<dbReference type="InterPro" id="IPR016174">
    <property type="entry name" value="Di-haem_cyt_TM"/>
</dbReference>
<dbReference type="PANTHER" id="PTHR19271">
    <property type="entry name" value="CYTOCHROME B"/>
    <property type="match status" value="1"/>
</dbReference>
<dbReference type="PANTHER" id="PTHR19271:SF16">
    <property type="entry name" value="CYTOCHROME B"/>
    <property type="match status" value="1"/>
</dbReference>
<dbReference type="Pfam" id="PF00032">
    <property type="entry name" value="Cytochrom_B_C"/>
    <property type="match status" value="1"/>
</dbReference>
<dbReference type="Pfam" id="PF00033">
    <property type="entry name" value="Cytochrome_B"/>
    <property type="match status" value="1"/>
</dbReference>
<dbReference type="PIRSF" id="PIRSF038885">
    <property type="entry name" value="COB"/>
    <property type="match status" value="1"/>
</dbReference>
<dbReference type="SUPFAM" id="SSF81648">
    <property type="entry name" value="a domain/subunit of cytochrome bc1 complex (Ubiquinol-cytochrome c reductase)"/>
    <property type="match status" value="1"/>
</dbReference>
<dbReference type="SUPFAM" id="SSF81342">
    <property type="entry name" value="Transmembrane di-heme cytochromes"/>
    <property type="match status" value="1"/>
</dbReference>
<dbReference type="PROSITE" id="PS51003">
    <property type="entry name" value="CYTB_CTER"/>
    <property type="match status" value="1"/>
</dbReference>
<dbReference type="PROSITE" id="PS51002">
    <property type="entry name" value="CYTB_NTER"/>
    <property type="match status" value="1"/>
</dbReference>
<gene>
    <name type="primary">MT-CYB</name>
    <name type="synonym">COB</name>
    <name type="synonym">CYTB</name>
    <name type="synonym">MTCYB</name>
</gene>
<proteinExistence type="inferred from homology"/>
<evidence type="ECO:0000250" key="1"/>
<evidence type="ECO:0000250" key="2">
    <source>
        <dbReference type="UniProtKB" id="P00157"/>
    </source>
</evidence>
<evidence type="ECO:0000255" key="3">
    <source>
        <dbReference type="PROSITE-ProRule" id="PRU00967"/>
    </source>
</evidence>
<evidence type="ECO:0000255" key="4">
    <source>
        <dbReference type="PROSITE-ProRule" id="PRU00968"/>
    </source>
</evidence>
<comment type="function">
    <text evidence="2">Component of the ubiquinol-cytochrome c reductase complex (complex III or cytochrome b-c1 complex) that is part of the mitochondrial respiratory chain. The b-c1 complex mediates electron transfer from ubiquinol to cytochrome c. Contributes to the generation of a proton gradient across the mitochondrial membrane that is then used for ATP synthesis.</text>
</comment>
<comment type="cofactor">
    <cofactor evidence="2">
        <name>heme b</name>
        <dbReference type="ChEBI" id="CHEBI:60344"/>
    </cofactor>
    <text evidence="2">Binds 2 heme b groups non-covalently.</text>
</comment>
<comment type="subunit">
    <text evidence="2">The cytochrome bc1 complex contains 11 subunits: 3 respiratory subunits (MT-CYB, CYC1 and UQCRFS1), 2 core proteins (UQCRC1 and UQCRC2) and 6 low-molecular weight proteins (UQCRH/QCR6, UQCRB/QCR7, UQCRQ/QCR8, UQCR10/QCR9, UQCR11/QCR10 and a cleavage product of UQCRFS1). This cytochrome bc1 complex then forms a dimer.</text>
</comment>
<comment type="subcellular location">
    <subcellularLocation>
        <location evidence="2">Mitochondrion inner membrane</location>
        <topology evidence="2">Multi-pass membrane protein</topology>
    </subcellularLocation>
</comment>
<comment type="miscellaneous">
    <text evidence="1">Heme 1 (or BL or b562) is low-potential and absorbs at about 562 nm, and heme 2 (or BH or b566) is high-potential and absorbs at about 566 nm.</text>
</comment>
<comment type="similarity">
    <text evidence="3 4">Belongs to the cytochrome b family.</text>
</comment>
<comment type="caution">
    <text evidence="2">The full-length protein contains only eight transmembrane helices, not nine as predicted by bioinformatics tools.</text>
</comment>
<protein>
    <recommendedName>
        <fullName>Cytochrome b</fullName>
    </recommendedName>
    <alternativeName>
        <fullName>Complex III subunit 3</fullName>
    </alternativeName>
    <alternativeName>
        <fullName>Complex III subunit III</fullName>
    </alternativeName>
    <alternativeName>
        <fullName>Cytochrome b-c1 complex subunit 3</fullName>
    </alternativeName>
    <alternativeName>
        <fullName>Ubiquinol-cytochrome-c reductase complex cytochrome b subunit</fullName>
    </alternativeName>
</protein>
<geneLocation type="mitochondrion"/>
<keyword id="KW-0249">Electron transport</keyword>
<keyword id="KW-0349">Heme</keyword>
<keyword id="KW-0408">Iron</keyword>
<keyword id="KW-0472">Membrane</keyword>
<keyword id="KW-0479">Metal-binding</keyword>
<keyword id="KW-0496">Mitochondrion</keyword>
<keyword id="KW-0999">Mitochondrion inner membrane</keyword>
<keyword id="KW-0679">Respiratory chain</keyword>
<keyword id="KW-0812">Transmembrane</keyword>
<keyword id="KW-1133">Transmembrane helix</keyword>
<keyword id="KW-0813">Transport</keyword>
<keyword id="KW-0830">Ubiquinone</keyword>
<reference key="1">
    <citation type="journal article" date="2002" name="Proc. Natl. Acad. Sci. U.S.A.">
        <title>Mammalian mitogenomic relationships and the root of the eutherian tree.</title>
        <authorList>
            <person name="Arnason U."/>
            <person name="Adegoke J.A."/>
            <person name="Bodin K."/>
            <person name="Born E.W."/>
            <person name="Esa Y.B."/>
            <person name="Gullberg A."/>
            <person name="Nilsson M."/>
            <person name="Short R.V."/>
            <person name="Xu X."/>
            <person name="Janke A."/>
        </authorList>
    </citation>
    <scope>NUCLEOTIDE SEQUENCE [GENOMIC DNA]</scope>
</reference>